<dbReference type="EMBL" id="AE016825">
    <property type="protein sequence ID" value="AAQ61824.1"/>
    <property type="molecule type" value="Genomic_DNA"/>
</dbReference>
<dbReference type="RefSeq" id="WP_011137710.1">
    <property type="nucleotide sequence ID" value="NC_005085.1"/>
</dbReference>
<dbReference type="SMR" id="Q7NQH4"/>
<dbReference type="STRING" id="243365.CV_4163"/>
<dbReference type="GeneID" id="66366365"/>
<dbReference type="KEGG" id="cvi:CV_4163"/>
<dbReference type="eggNOG" id="COG0099">
    <property type="taxonomic scope" value="Bacteria"/>
</dbReference>
<dbReference type="HOGENOM" id="CLU_103849_1_2_4"/>
<dbReference type="OrthoDB" id="9803610at2"/>
<dbReference type="Proteomes" id="UP000001424">
    <property type="component" value="Chromosome"/>
</dbReference>
<dbReference type="GO" id="GO:0005829">
    <property type="term" value="C:cytosol"/>
    <property type="evidence" value="ECO:0007669"/>
    <property type="project" value="TreeGrafter"/>
</dbReference>
<dbReference type="GO" id="GO:0015935">
    <property type="term" value="C:small ribosomal subunit"/>
    <property type="evidence" value="ECO:0007669"/>
    <property type="project" value="TreeGrafter"/>
</dbReference>
<dbReference type="GO" id="GO:0019843">
    <property type="term" value="F:rRNA binding"/>
    <property type="evidence" value="ECO:0007669"/>
    <property type="project" value="UniProtKB-UniRule"/>
</dbReference>
<dbReference type="GO" id="GO:0003735">
    <property type="term" value="F:structural constituent of ribosome"/>
    <property type="evidence" value="ECO:0007669"/>
    <property type="project" value="InterPro"/>
</dbReference>
<dbReference type="GO" id="GO:0000049">
    <property type="term" value="F:tRNA binding"/>
    <property type="evidence" value="ECO:0007669"/>
    <property type="project" value="UniProtKB-UniRule"/>
</dbReference>
<dbReference type="GO" id="GO:0006412">
    <property type="term" value="P:translation"/>
    <property type="evidence" value="ECO:0007669"/>
    <property type="project" value="UniProtKB-UniRule"/>
</dbReference>
<dbReference type="FunFam" id="1.10.8.50:FF:000001">
    <property type="entry name" value="30S ribosomal protein S13"/>
    <property type="match status" value="1"/>
</dbReference>
<dbReference type="FunFam" id="4.10.910.10:FF:000001">
    <property type="entry name" value="30S ribosomal protein S13"/>
    <property type="match status" value="1"/>
</dbReference>
<dbReference type="Gene3D" id="1.10.8.50">
    <property type="match status" value="1"/>
</dbReference>
<dbReference type="Gene3D" id="4.10.910.10">
    <property type="entry name" value="30s ribosomal protein s13, domain 2"/>
    <property type="match status" value="1"/>
</dbReference>
<dbReference type="HAMAP" id="MF_01315">
    <property type="entry name" value="Ribosomal_uS13"/>
    <property type="match status" value="1"/>
</dbReference>
<dbReference type="InterPro" id="IPR027437">
    <property type="entry name" value="Rbsml_uS13_C"/>
</dbReference>
<dbReference type="InterPro" id="IPR001892">
    <property type="entry name" value="Ribosomal_uS13"/>
</dbReference>
<dbReference type="InterPro" id="IPR010979">
    <property type="entry name" value="Ribosomal_uS13-like_H2TH"/>
</dbReference>
<dbReference type="InterPro" id="IPR019980">
    <property type="entry name" value="Ribosomal_uS13_bac-type"/>
</dbReference>
<dbReference type="InterPro" id="IPR018269">
    <property type="entry name" value="Ribosomal_uS13_CS"/>
</dbReference>
<dbReference type="NCBIfam" id="TIGR03631">
    <property type="entry name" value="uS13_bact"/>
    <property type="match status" value="1"/>
</dbReference>
<dbReference type="PANTHER" id="PTHR10871">
    <property type="entry name" value="30S RIBOSOMAL PROTEIN S13/40S RIBOSOMAL PROTEIN S18"/>
    <property type="match status" value="1"/>
</dbReference>
<dbReference type="PANTHER" id="PTHR10871:SF1">
    <property type="entry name" value="SMALL RIBOSOMAL SUBUNIT PROTEIN US13M"/>
    <property type="match status" value="1"/>
</dbReference>
<dbReference type="Pfam" id="PF00416">
    <property type="entry name" value="Ribosomal_S13"/>
    <property type="match status" value="1"/>
</dbReference>
<dbReference type="PIRSF" id="PIRSF002134">
    <property type="entry name" value="Ribosomal_S13"/>
    <property type="match status" value="1"/>
</dbReference>
<dbReference type="SUPFAM" id="SSF46946">
    <property type="entry name" value="S13-like H2TH domain"/>
    <property type="match status" value="1"/>
</dbReference>
<dbReference type="PROSITE" id="PS00646">
    <property type="entry name" value="RIBOSOMAL_S13_1"/>
    <property type="match status" value="1"/>
</dbReference>
<dbReference type="PROSITE" id="PS50159">
    <property type="entry name" value="RIBOSOMAL_S13_2"/>
    <property type="match status" value="1"/>
</dbReference>
<organism>
    <name type="scientific">Chromobacterium violaceum (strain ATCC 12472 / DSM 30191 / JCM 1249 / CCUG 213 / NBRC 12614 / NCIMB 9131 / NCTC 9757 / MK)</name>
    <dbReference type="NCBI Taxonomy" id="243365"/>
    <lineage>
        <taxon>Bacteria</taxon>
        <taxon>Pseudomonadati</taxon>
        <taxon>Pseudomonadota</taxon>
        <taxon>Betaproteobacteria</taxon>
        <taxon>Neisseriales</taxon>
        <taxon>Chromobacteriaceae</taxon>
        <taxon>Chromobacterium</taxon>
    </lineage>
</organism>
<feature type="chain" id="PRO_0000230493" description="Small ribosomal subunit protein uS13">
    <location>
        <begin position="1"/>
        <end position="120"/>
    </location>
</feature>
<feature type="region of interest" description="Disordered" evidence="2">
    <location>
        <begin position="96"/>
        <end position="120"/>
    </location>
</feature>
<proteinExistence type="inferred from homology"/>
<comment type="function">
    <text evidence="1">Located at the top of the head of the 30S subunit, it contacts several helices of the 16S rRNA. In the 70S ribosome it contacts the 23S rRNA (bridge B1a) and protein L5 of the 50S subunit (bridge B1b), connecting the 2 subunits; these bridges are implicated in subunit movement. Contacts the tRNAs in the A and P-sites.</text>
</comment>
<comment type="subunit">
    <text evidence="1">Part of the 30S ribosomal subunit. Forms a loose heterodimer with protein S19. Forms two bridges to the 50S subunit in the 70S ribosome.</text>
</comment>
<comment type="similarity">
    <text evidence="1">Belongs to the universal ribosomal protein uS13 family.</text>
</comment>
<name>RS13_CHRVO</name>
<gene>
    <name evidence="1" type="primary">rpsM</name>
    <name type="ordered locus">CV_4163</name>
</gene>
<reference key="1">
    <citation type="journal article" date="2003" name="Proc. Natl. Acad. Sci. U.S.A.">
        <title>The complete genome sequence of Chromobacterium violaceum reveals remarkable and exploitable bacterial adaptability.</title>
        <authorList>
            <person name="Vasconcelos A.T.R."/>
            <person name="de Almeida D.F."/>
            <person name="Hungria M."/>
            <person name="Guimaraes C.T."/>
            <person name="Antonio R.V."/>
            <person name="Almeida F.C."/>
            <person name="de Almeida L.G.P."/>
            <person name="de Almeida R."/>
            <person name="Alves-Gomes J.A."/>
            <person name="Andrade E.M."/>
            <person name="Araripe J."/>
            <person name="de Araujo M.F.F."/>
            <person name="Astolfi-Filho S."/>
            <person name="Azevedo V."/>
            <person name="Baptista A.J."/>
            <person name="Bataus L.A.M."/>
            <person name="Batista J.S."/>
            <person name="Belo A."/>
            <person name="van den Berg C."/>
            <person name="Bogo M."/>
            <person name="Bonatto S."/>
            <person name="Bordignon J."/>
            <person name="Brigido M.M."/>
            <person name="Brito C.A."/>
            <person name="Brocchi M."/>
            <person name="Burity H.A."/>
            <person name="Camargo A.A."/>
            <person name="Cardoso D.D.P."/>
            <person name="Carneiro N.P."/>
            <person name="Carraro D.M."/>
            <person name="Carvalho C.M.B."/>
            <person name="Cascardo J.C.M."/>
            <person name="Cavada B.S."/>
            <person name="Chueire L.M.O."/>
            <person name="Creczynski-Pasa T.B."/>
            <person name="Cunha-Junior N.C."/>
            <person name="Fagundes N."/>
            <person name="Falcao C.L."/>
            <person name="Fantinatti F."/>
            <person name="Farias I.P."/>
            <person name="Felipe M.S.S."/>
            <person name="Ferrari L.P."/>
            <person name="Ferro J.A."/>
            <person name="Ferro M.I.T."/>
            <person name="Franco G.R."/>
            <person name="Freitas N.S.A."/>
            <person name="Furlan L.R."/>
            <person name="Gazzinelli R.T."/>
            <person name="Gomes E.A."/>
            <person name="Goncalves P.R."/>
            <person name="Grangeiro T.B."/>
            <person name="Grattapaglia D."/>
            <person name="Grisard E.C."/>
            <person name="Hanna E.S."/>
            <person name="Jardim S.N."/>
            <person name="Laurino J."/>
            <person name="Leoi L.C.T."/>
            <person name="Lima L.F.A."/>
            <person name="Loureiro M.F."/>
            <person name="Lyra M.C.C.P."/>
            <person name="Madeira H.M.F."/>
            <person name="Manfio G.P."/>
            <person name="Maranhao A.Q."/>
            <person name="Martins W.S."/>
            <person name="di Mauro S.M.Z."/>
            <person name="de Medeiros S.R.B."/>
            <person name="Meissner R.V."/>
            <person name="Moreira M.A.M."/>
            <person name="Nascimento F.F."/>
            <person name="Nicolas M.F."/>
            <person name="Oliveira J.G."/>
            <person name="Oliveira S.C."/>
            <person name="Paixao R.F.C."/>
            <person name="Parente J.A."/>
            <person name="Pedrosa F.O."/>
            <person name="Pena S.D.J."/>
            <person name="Pereira J.O."/>
            <person name="Pereira M."/>
            <person name="Pinto L.S.R.C."/>
            <person name="Pinto L.S."/>
            <person name="Porto J.I.R."/>
            <person name="Potrich D.P."/>
            <person name="Ramalho-Neto C.E."/>
            <person name="Reis A.M.M."/>
            <person name="Rigo L.U."/>
            <person name="Rondinelli E."/>
            <person name="Santos E.B.P."/>
            <person name="Santos F.R."/>
            <person name="Schneider M.P.C."/>
            <person name="Seuanez H.N."/>
            <person name="Silva A.M.R."/>
            <person name="da Silva A.L.C."/>
            <person name="Silva D.W."/>
            <person name="Silva R."/>
            <person name="Simoes I.C."/>
            <person name="Simon D."/>
            <person name="Soares C.M.A."/>
            <person name="Soares R.B.A."/>
            <person name="Souza E.M."/>
            <person name="Souza K.R.L."/>
            <person name="Souza R.C."/>
            <person name="Steffens M.B.R."/>
            <person name="Steindel M."/>
            <person name="Teixeira S.R."/>
            <person name="Urmenyi T."/>
            <person name="Vettore A."/>
            <person name="Wassem R."/>
            <person name="Zaha A."/>
            <person name="Simpson A.J.G."/>
        </authorList>
    </citation>
    <scope>NUCLEOTIDE SEQUENCE [LARGE SCALE GENOMIC DNA]</scope>
    <source>
        <strain>ATCC 12472 / DSM 30191 / JCM 1249 / CCUG 213 / NBRC 12614 / NCIMB 9131 / NCTC 9757 / MK</strain>
    </source>
</reference>
<protein>
    <recommendedName>
        <fullName evidence="1">Small ribosomal subunit protein uS13</fullName>
    </recommendedName>
    <alternativeName>
        <fullName evidence="3">30S ribosomal protein S13</fullName>
    </alternativeName>
</protein>
<accession>Q7NQH4</accession>
<evidence type="ECO:0000255" key="1">
    <source>
        <dbReference type="HAMAP-Rule" id="MF_01315"/>
    </source>
</evidence>
<evidence type="ECO:0000256" key="2">
    <source>
        <dbReference type="SAM" id="MobiDB-lite"/>
    </source>
</evidence>
<evidence type="ECO:0000305" key="3"/>
<keyword id="KW-1185">Reference proteome</keyword>
<keyword id="KW-0687">Ribonucleoprotein</keyword>
<keyword id="KW-0689">Ribosomal protein</keyword>
<keyword id="KW-0694">RNA-binding</keyword>
<keyword id="KW-0699">rRNA-binding</keyword>
<keyword id="KW-0820">tRNA-binding</keyword>
<sequence length="120" mass="13286">MARIAGVNIPNHAHAVIGLQAIFGVGQTRAQQICAAASVNPSTKVKDLTEAEMEALRDQVAKFTVEGDLRREITMSIKRLMDMGCYRGFRHRRGLPCRGQRTRTNARTRKGPRKAIAGKK</sequence>